<dbReference type="EC" id="2.8.1.6" evidence="1"/>
<dbReference type="EMBL" id="CP000916">
    <property type="protein sequence ID" value="ACM22464.1"/>
    <property type="molecule type" value="Genomic_DNA"/>
</dbReference>
<dbReference type="SMR" id="B9KBR9"/>
<dbReference type="STRING" id="309803.CTN_0289"/>
<dbReference type="KEGG" id="tna:CTN_0289"/>
<dbReference type="eggNOG" id="COG0502">
    <property type="taxonomic scope" value="Bacteria"/>
</dbReference>
<dbReference type="HOGENOM" id="CLU_033172_2_1_0"/>
<dbReference type="UniPathway" id="UPA00078">
    <property type="reaction ID" value="UER00162"/>
</dbReference>
<dbReference type="Proteomes" id="UP000000445">
    <property type="component" value="Chromosome"/>
</dbReference>
<dbReference type="GO" id="GO:0051537">
    <property type="term" value="F:2 iron, 2 sulfur cluster binding"/>
    <property type="evidence" value="ECO:0007669"/>
    <property type="project" value="UniProtKB-KW"/>
</dbReference>
<dbReference type="GO" id="GO:0051539">
    <property type="term" value="F:4 iron, 4 sulfur cluster binding"/>
    <property type="evidence" value="ECO:0007669"/>
    <property type="project" value="UniProtKB-KW"/>
</dbReference>
<dbReference type="GO" id="GO:0004076">
    <property type="term" value="F:biotin synthase activity"/>
    <property type="evidence" value="ECO:0007669"/>
    <property type="project" value="UniProtKB-UniRule"/>
</dbReference>
<dbReference type="GO" id="GO:0005506">
    <property type="term" value="F:iron ion binding"/>
    <property type="evidence" value="ECO:0007669"/>
    <property type="project" value="UniProtKB-UniRule"/>
</dbReference>
<dbReference type="GO" id="GO:0009102">
    <property type="term" value="P:biotin biosynthetic process"/>
    <property type="evidence" value="ECO:0007669"/>
    <property type="project" value="UniProtKB-UniRule"/>
</dbReference>
<dbReference type="CDD" id="cd01335">
    <property type="entry name" value="Radical_SAM"/>
    <property type="match status" value="1"/>
</dbReference>
<dbReference type="Gene3D" id="3.20.20.70">
    <property type="entry name" value="Aldolase class I"/>
    <property type="match status" value="1"/>
</dbReference>
<dbReference type="HAMAP" id="MF_01694">
    <property type="entry name" value="BioB"/>
    <property type="match status" value="1"/>
</dbReference>
<dbReference type="InterPro" id="IPR013785">
    <property type="entry name" value="Aldolase_TIM"/>
</dbReference>
<dbReference type="InterPro" id="IPR010722">
    <property type="entry name" value="BATS_dom"/>
</dbReference>
<dbReference type="InterPro" id="IPR002684">
    <property type="entry name" value="Biotin_synth/BioAB"/>
</dbReference>
<dbReference type="InterPro" id="IPR024177">
    <property type="entry name" value="Biotin_synthase"/>
</dbReference>
<dbReference type="InterPro" id="IPR006638">
    <property type="entry name" value="Elp3/MiaA/NifB-like_rSAM"/>
</dbReference>
<dbReference type="InterPro" id="IPR007197">
    <property type="entry name" value="rSAM"/>
</dbReference>
<dbReference type="NCBIfam" id="TIGR00433">
    <property type="entry name" value="bioB"/>
    <property type="match status" value="1"/>
</dbReference>
<dbReference type="PANTHER" id="PTHR22976">
    <property type="entry name" value="BIOTIN SYNTHASE"/>
    <property type="match status" value="1"/>
</dbReference>
<dbReference type="PANTHER" id="PTHR22976:SF2">
    <property type="entry name" value="BIOTIN SYNTHASE, MITOCHONDRIAL"/>
    <property type="match status" value="1"/>
</dbReference>
<dbReference type="Pfam" id="PF06968">
    <property type="entry name" value="BATS"/>
    <property type="match status" value="1"/>
</dbReference>
<dbReference type="Pfam" id="PF04055">
    <property type="entry name" value="Radical_SAM"/>
    <property type="match status" value="1"/>
</dbReference>
<dbReference type="PIRSF" id="PIRSF001619">
    <property type="entry name" value="Biotin_synth"/>
    <property type="match status" value="1"/>
</dbReference>
<dbReference type="SFLD" id="SFLDG01060">
    <property type="entry name" value="BATS_domain_containing"/>
    <property type="match status" value="1"/>
</dbReference>
<dbReference type="SFLD" id="SFLDG01278">
    <property type="entry name" value="biotin_synthase_like"/>
    <property type="match status" value="1"/>
</dbReference>
<dbReference type="SMART" id="SM00876">
    <property type="entry name" value="BATS"/>
    <property type="match status" value="1"/>
</dbReference>
<dbReference type="SMART" id="SM00729">
    <property type="entry name" value="Elp3"/>
    <property type="match status" value="1"/>
</dbReference>
<dbReference type="SUPFAM" id="SSF102114">
    <property type="entry name" value="Radical SAM enzymes"/>
    <property type="match status" value="1"/>
</dbReference>
<dbReference type="PROSITE" id="PS51918">
    <property type="entry name" value="RADICAL_SAM"/>
    <property type="match status" value="1"/>
</dbReference>
<organism>
    <name type="scientific">Thermotoga neapolitana (strain ATCC 49049 / DSM 4359 / NBRC 107923 / NS-E)</name>
    <dbReference type="NCBI Taxonomy" id="309803"/>
    <lineage>
        <taxon>Bacteria</taxon>
        <taxon>Thermotogati</taxon>
        <taxon>Thermotogota</taxon>
        <taxon>Thermotogae</taxon>
        <taxon>Thermotogales</taxon>
        <taxon>Thermotogaceae</taxon>
        <taxon>Thermotoga</taxon>
    </lineage>
</organism>
<protein>
    <recommendedName>
        <fullName evidence="1">Biotin synthase</fullName>
        <ecNumber evidence="1">2.8.1.6</ecNumber>
    </recommendedName>
</protein>
<feature type="chain" id="PRO_0000381684" description="Biotin synthase">
    <location>
        <begin position="1"/>
        <end position="279"/>
    </location>
</feature>
<feature type="domain" description="Radical SAM core" evidence="2">
    <location>
        <begin position="2"/>
        <end position="232"/>
    </location>
</feature>
<feature type="binding site" evidence="1">
    <location>
        <position position="20"/>
    </location>
    <ligand>
        <name>[4Fe-4S] cluster</name>
        <dbReference type="ChEBI" id="CHEBI:49883"/>
        <note>4Fe-4S-S-AdoMet</note>
    </ligand>
</feature>
<feature type="binding site" evidence="1">
    <location>
        <position position="24"/>
    </location>
    <ligand>
        <name>[4Fe-4S] cluster</name>
        <dbReference type="ChEBI" id="CHEBI:49883"/>
        <note>4Fe-4S-S-AdoMet</note>
    </ligand>
</feature>
<feature type="binding site" evidence="1">
    <location>
        <position position="27"/>
    </location>
    <ligand>
        <name>[4Fe-4S] cluster</name>
        <dbReference type="ChEBI" id="CHEBI:49883"/>
        <note>4Fe-4S-S-AdoMet</note>
    </ligand>
</feature>
<feature type="binding site" evidence="1">
    <location>
        <position position="96"/>
    </location>
    <ligand>
        <name>[2Fe-2S] cluster</name>
        <dbReference type="ChEBI" id="CHEBI:190135"/>
    </ligand>
</feature>
<feature type="binding site" evidence="1">
    <location>
        <position position="156"/>
    </location>
    <ligand>
        <name>[2Fe-2S] cluster</name>
        <dbReference type="ChEBI" id="CHEBI:190135"/>
    </ligand>
</feature>
<feature type="binding site" evidence="1">
    <location>
        <position position="227"/>
    </location>
    <ligand>
        <name>[2Fe-2S] cluster</name>
        <dbReference type="ChEBI" id="CHEBI:190135"/>
    </ligand>
</feature>
<gene>
    <name evidence="1" type="primary">bioB</name>
    <name type="ordered locus">CTN_0289</name>
</gene>
<accession>B9KBR9</accession>
<sequence length="279" mass="31029">MVRNSRLDICSIVNAKSGICDQDCKFCAQSSLYNTGVKRYPLLDEESILEKAKEAEKMGAVRFGIVTSGKRPTRDELLKIASIIEFLKVTTSLRICASLGTLEKDELSYLKDHGLDRYHHNLETSPGFFQNICTTHTFYDRVKTVENAKSIGLEVCSGGIFGVGESFEDRLELARILKDLEVDSVPINFLIPIKGTPFENFPELDVVERIKTIAAFRIVLGENVTIKIAAGREKLGDFQALAFFAGANGMIVGGYLTVKGRSYDDDRKLVEGLKELMGW</sequence>
<name>BIOB_THENN</name>
<evidence type="ECO:0000255" key="1">
    <source>
        <dbReference type="HAMAP-Rule" id="MF_01694"/>
    </source>
</evidence>
<evidence type="ECO:0000255" key="2">
    <source>
        <dbReference type="PROSITE-ProRule" id="PRU01266"/>
    </source>
</evidence>
<comment type="function">
    <text evidence="1">Catalyzes the conversion of dethiobiotin (DTB) to biotin by the insertion of a sulfur atom into dethiobiotin via a radical-based mechanism.</text>
</comment>
<comment type="catalytic activity">
    <reaction evidence="1">
        <text>(4R,5S)-dethiobiotin + (sulfur carrier)-SH + 2 reduced [2Fe-2S]-[ferredoxin] + 2 S-adenosyl-L-methionine = (sulfur carrier)-H + biotin + 2 5'-deoxyadenosine + 2 L-methionine + 2 oxidized [2Fe-2S]-[ferredoxin]</text>
        <dbReference type="Rhea" id="RHEA:22060"/>
        <dbReference type="Rhea" id="RHEA-COMP:10000"/>
        <dbReference type="Rhea" id="RHEA-COMP:10001"/>
        <dbReference type="Rhea" id="RHEA-COMP:14737"/>
        <dbReference type="Rhea" id="RHEA-COMP:14739"/>
        <dbReference type="ChEBI" id="CHEBI:17319"/>
        <dbReference type="ChEBI" id="CHEBI:29917"/>
        <dbReference type="ChEBI" id="CHEBI:33737"/>
        <dbReference type="ChEBI" id="CHEBI:33738"/>
        <dbReference type="ChEBI" id="CHEBI:57586"/>
        <dbReference type="ChEBI" id="CHEBI:57844"/>
        <dbReference type="ChEBI" id="CHEBI:59789"/>
        <dbReference type="ChEBI" id="CHEBI:64428"/>
        <dbReference type="ChEBI" id="CHEBI:149473"/>
        <dbReference type="EC" id="2.8.1.6"/>
    </reaction>
</comment>
<comment type="cofactor">
    <cofactor evidence="1">
        <name>[4Fe-4S] cluster</name>
        <dbReference type="ChEBI" id="CHEBI:49883"/>
    </cofactor>
    <text evidence="1">Binds 1 [4Fe-4S] cluster. The cluster is coordinated with 3 cysteines and an exchangeable S-adenosyl-L-methionine.</text>
</comment>
<comment type="cofactor">
    <cofactor evidence="1">
        <name>[2Fe-2S] cluster</name>
        <dbReference type="ChEBI" id="CHEBI:190135"/>
    </cofactor>
    <text evidence="1">Binds 1 [2Fe-2S] cluster. The cluster is coordinated with 3 cysteines and 1 arginine.</text>
</comment>
<comment type="pathway">
    <text evidence="1">Cofactor biosynthesis; biotin biosynthesis; biotin from 7,8-diaminononanoate: step 2/2.</text>
</comment>
<comment type="subunit">
    <text evidence="1">Homodimer.</text>
</comment>
<comment type="similarity">
    <text evidence="1">Belongs to the radical SAM superfamily. Biotin synthase family.</text>
</comment>
<proteinExistence type="inferred from homology"/>
<reference key="1">
    <citation type="submission" date="2007-11" db="EMBL/GenBank/DDBJ databases">
        <title>The genome sequence of the hyperthermophilic bacterium Thermotoga neapolitana.</title>
        <authorList>
            <person name="Lim S.K."/>
            <person name="Kim J.S."/>
            <person name="Cha S.H."/>
            <person name="Park B.C."/>
            <person name="Lee D.S."/>
            <person name="Tae H.S."/>
            <person name="Kim S.-J."/>
            <person name="Kim J.J."/>
            <person name="Park K.J."/>
            <person name="Lee S.Y."/>
        </authorList>
    </citation>
    <scope>NUCLEOTIDE SEQUENCE [LARGE SCALE GENOMIC DNA]</scope>
    <source>
        <strain>ATCC 49049 / DSM 4359 / NBRC 107923 / NS-E</strain>
    </source>
</reference>
<keyword id="KW-0001">2Fe-2S</keyword>
<keyword id="KW-0004">4Fe-4S</keyword>
<keyword id="KW-0093">Biotin biosynthesis</keyword>
<keyword id="KW-0408">Iron</keyword>
<keyword id="KW-0411">Iron-sulfur</keyword>
<keyword id="KW-0479">Metal-binding</keyword>
<keyword id="KW-0949">S-adenosyl-L-methionine</keyword>
<keyword id="KW-0808">Transferase</keyword>